<evidence type="ECO:0000255" key="1">
    <source>
        <dbReference type="HAMAP-Rule" id="MF_01521"/>
    </source>
</evidence>
<gene>
    <name evidence="1" type="primary">mntP</name>
    <name type="synonym">yebN</name>
    <name type="ordered locus">ECIAI39_1231</name>
</gene>
<dbReference type="EMBL" id="CU928164">
    <property type="protein sequence ID" value="CAR17365.1"/>
    <property type="molecule type" value="Genomic_DNA"/>
</dbReference>
<dbReference type="RefSeq" id="WP_012602293.1">
    <property type="nucleotide sequence ID" value="NC_011750.1"/>
</dbReference>
<dbReference type="RefSeq" id="YP_002407239.1">
    <property type="nucleotide sequence ID" value="NC_011750.1"/>
</dbReference>
<dbReference type="STRING" id="585057.ECIAI39_1231"/>
<dbReference type="KEGG" id="ect:ECIAI39_1231"/>
<dbReference type="PATRIC" id="fig|585057.6.peg.1289"/>
<dbReference type="HOGENOM" id="CLU_096410_0_0_6"/>
<dbReference type="Proteomes" id="UP000000749">
    <property type="component" value="Chromosome"/>
</dbReference>
<dbReference type="GO" id="GO:0005886">
    <property type="term" value="C:plasma membrane"/>
    <property type="evidence" value="ECO:0007669"/>
    <property type="project" value="UniProtKB-SubCell"/>
</dbReference>
<dbReference type="GO" id="GO:0005384">
    <property type="term" value="F:manganese ion transmembrane transporter activity"/>
    <property type="evidence" value="ECO:0007669"/>
    <property type="project" value="UniProtKB-UniRule"/>
</dbReference>
<dbReference type="HAMAP" id="MF_01521">
    <property type="entry name" value="MntP_pump"/>
    <property type="match status" value="1"/>
</dbReference>
<dbReference type="InterPro" id="IPR003810">
    <property type="entry name" value="Mntp/YtaF"/>
</dbReference>
<dbReference type="InterPro" id="IPR022929">
    <property type="entry name" value="Put_MntP"/>
</dbReference>
<dbReference type="NCBIfam" id="NF008546">
    <property type="entry name" value="PRK11469.1"/>
    <property type="match status" value="1"/>
</dbReference>
<dbReference type="PANTHER" id="PTHR35529">
    <property type="entry name" value="MANGANESE EFFLUX PUMP MNTP-RELATED"/>
    <property type="match status" value="1"/>
</dbReference>
<dbReference type="PANTHER" id="PTHR35529:SF1">
    <property type="entry name" value="MANGANESE EFFLUX PUMP MNTP-RELATED"/>
    <property type="match status" value="1"/>
</dbReference>
<dbReference type="Pfam" id="PF02659">
    <property type="entry name" value="Mntp"/>
    <property type="match status" value="1"/>
</dbReference>
<reference key="1">
    <citation type="journal article" date="2009" name="PLoS Genet.">
        <title>Organised genome dynamics in the Escherichia coli species results in highly diverse adaptive paths.</title>
        <authorList>
            <person name="Touchon M."/>
            <person name="Hoede C."/>
            <person name="Tenaillon O."/>
            <person name="Barbe V."/>
            <person name="Baeriswyl S."/>
            <person name="Bidet P."/>
            <person name="Bingen E."/>
            <person name="Bonacorsi S."/>
            <person name="Bouchier C."/>
            <person name="Bouvet O."/>
            <person name="Calteau A."/>
            <person name="Chiapello H."/>
            <person name="Clermont O."/>
            <person name="Cruveiller S."/>
            <person name="Danchin A."/>
            <person name="Diard M."/>
            <person name="Dossat C."/>
            <person name="Karoui M.E."/>
            <person name="Frapy E."/>
            <person name="Garry L."/>
            <person name="Ghigo J.M."/>
            <person name="Gilles A.M."/>
            <person name="Johnson J."/>
            <person name="Le Bouguenec C."/>
            <person name="Lescat M."/>
            <person name="Mangenot S."/>
            <person name="Martinez-Jehanne V."/>
            <person name="Matic I."/>
            <person name="Nassif X."/>
            <person name="Oztas S."/>
            <person name="Petit M.A."/>
            <person name="Pichon C."/>
            <person name="Rouy Z."/>
            <person name="Ruf C.S."/>
            <person name="Schneider D."/>
            <person name="Tourret J."/>
            <person name="Vacherie B."/>
            <person name="Vallenet D."/>
            <person name="Medigue C."/>
            <person name="Rocha E.P.C."/>
            <person name="Denamur E."/>
        </authorList>
    </citation>
    <scope>NUCLEOTIDE SEQUENCE [LARGE SCALE GENOMIC DNA]</scope>
    <source>
        <strain>IAI39 / ExPEC</strain>
    </source>
</reference>
<protein>
    <recommendedName>
        <fullName evidence="1">Probable manganese efflux pump MntP</fullName>
    </recommendedName>
</protein>
<proteinExistence type="inferred from homology"/>
<organism>
    <name type="scientific">Escherichia coli O7:K1 (strain IAI39 / ExPEC)</name>
    <dbReference type="NCBI Taxonomy" id="585057"/>
    <lineage>
        <taxon>Bacteria</taxon>
        <taxon>Pseudomonadati</taxon>
        <taxon>Pseudomonadota</taxon>
        <taxon>Gammaproteobacteria</taxon>
        <taxon>Enterobacterales</taxon>
        <taxon>Enterobacteriaceae</taxon>
        <taxon>Escherichia</taxon>
    </lineage>
</organism>
<comment type="function">
    <text evidence="1">Probably functions as a manganese efflux pump.</text>
</comment>
<comment type="subcellular location">
    <subcellularLocation>
        <location evidence="1">Cell inner membrane</location>
        <topology evidence="1">Multi-pass membrane protein</topology>
    </subcellularLocation>
</comment>
<comment type="similarity">
    <text evidence="1">Belongs to the MntP (TC 9.B.29) family.</text>
</comment>
<accession>B7NSA0</accession>
<sequence length="188" mass="20143">MNITATVLLAFGMSMDAFAASIGKGATLHKPKFSEALRTGLIFGAVETLTPLIGWGMGMLASRFVLEWNHWIAFVLLIFLGGRMIIEGFRGPDDEDEEPRRRHGFWLLVTTAIATSLDAMAVGVGLAFLQVNIIATALAIGCATLIMSTLGMMVGRFIGSIIGKKAEILGGLVLIGIGVQILWTHFHG</sequence>
<name>MNTP_ECO7I</name>
<keyword id="KW-0997">Cell inner membrane</keyword>
<keyword id="KW-1003">Cell membrane</keyword>
<keyword id="KW-0406">Ion transport</keyword>
<keyword id="KW-0464">Manganese</keyword>
<keyword id="KW-0472">Membrane</keyword>
<keyword id="KW-0812">Transmembrane</keyword>
<keyword id="KW-1133">Transmembrane helix</keyword>
<keyword id="KW-0813">Transport</keyword>
<feature type="chain" id="PRO_1000200029" description="Probable manganese efflux pump MntP">
    <location>
        <begin position="1"/>
        <end position="188"/>
    </location>
</feature>
<feature type="transmembrane region" description="Helical" evidence="1">
    <location>
        <begin position="3"/>
        <end position="23"/>
    </location>
</feature>
<feature type="transmembrane region" description="Helical" evidence="1">
    <location>
        <begin position="66"/>
        <end position="86"/>
    </location>
</feature>
<feature type="transmembrane region" description="Helical" evidence="1">
    <location>
        <begin position="106"/>
        <end position="128"/>
    </location>
</feature>
<feature type="transmembrane region" description="Helical" evidence="1">
    <location>
        <begin position="143"/>
        <end position="163"/>
    </location>
</feature>
<feature type="transmembrane region" description="Helical" evidence="1">
    <location>
        <begin position="168"/>
        <end position="188"/>
    </location>
</feature>